<feature type="signal peptide" evidence="1">
    <location>
        <begin position="1"/>
        <end position="19"/>
    </location>
</feature>
<feature type="chain" id="PRO_0000453821" description="Nematocyst expressed protein 8" evidence="7">
    <location>
        <begin position="20"/>
        <end position="313"/>
    </location>
</feature>
<feature type="domain" description="ShKT 1" evidence="8">
    <location>
        <begin position="65"/>
        <end position="99"/>
    </location>
</feature>
<feature type="domain" description="ShKT 2" evidence="8">
    <location>
        <begin position="109"/>
        <end position="145"/>
    </location>
</feature>
<feature type="domain" description="ShKT 3" evidence="2">
    <location>
        <begin position="151"/>
        <end position="186"/>
    </location>
</feature>
<feature type="region of interest" description="Disordered" evidence="3">
    <location>
        <begin position="24"/>
        <end position="56"/>
    </location>
</feature>
<feature type="region of interest" description="Disordered" evidence="3">
    <location>
        <begin position="222"/>
        <end position="313"/>
    </location>
</feature>
<feature type="compositionally biased region" description="Acidic residues" evidence="3">
    <location>
        <begin position="32"/>
        <end position="44"/>
    </location>
</feature>
<feature type="compositionally biased region" description="Low complexity" evidence="3">
    <location>
        <begin position="222"/>
        <end position="244"/>
    </location>
</feature>
<feature type="compositionally biased region" description="Pro residues" evidence="3">
    <location>
        <begin position="245"/>
        <end position="265"/>
    </location>
</feature>
<feature type="compositionally biased region" description="Acidic residues" evidence="3">
    <location>
        <begin position="280"/>
        <end position="297"/>
    </location>
</feature>
<feature type="disulfide bond" evidence="7">
    <location>
        <begin position="65"/>
        <end position="99"/>
    </location>
</feature>
<feature type="disulfide bond" evidence="7">
    <location>
        <begin position="72"/>
        <end position="92"/>
    </location>
</feature>
<feature type="disulfide bond" evidence="7">
    <location>
        <begin position="81"/>
        <end position="96"/>
    </location>
</feature>
<feature type="disulfide bond" evidence="7">
    <location>
        <begin position="109"/>
        <end position="145"/>
    </location>
</feature>
<feature type="disulfide bond" evidence="7">
    <location>
        <begin position="127"/>
        <end position="142"/>
    </location>
</feature>
<feature type="disulfide bond" evidence="2">
    <location>
        <begin position="160"/>
        <end position="179"/>
    </location>
</feature>
<feature type="disulfide bond" evidence="2">
    <location>
        <begin position="169"/>
        <end position="183"/>
    </location>
</feature>
<reference evidence="9 10" key="1">
    <citation type="journal article" date="2007" name="Science">
        <title>Sea anemone genome reveals ancestral eumetazoan gene repertoire and genomic organization.</title>
        <authorList>
            <person name="Putnam N.H."/>
            <person name="Srivastava M."/>
            <person name="Hellsten U."/>
            <person name="Dirks B."/>
            <person name="Chapman J."/>
            <person name="Salamov A."/>
            <person name="Terry A."/>
            <person name="Shapiro H."/>
            <person name="Lindquist E."/>
            <person name="Kapitonov V.V."/>
            <person name="Jurka J."/>
            <person name="Genikhovich G."/>
            <person name="Grigoriev I.V."/>
            <person name="Lucas S.M."/>
            <person name="Steele R.E."/>
            <person name="Finnerty J.R."/>
            <person name="Technau U."/>
            <person name="Martindale M.Q."/>
            <person name="Rokhsar D.S."/>
        </authorList>
    </citation>
    <scope>NUCLEOTIDE SEQUENCE [LARGE SCALE GENOMIC DNA]</scope>
    <source>
        <strain evidence="10">CH2 X CH6</strain>
    </source>
</reference>
<reference key="2">
    <citation type="journal article" date="2013" name="Mar. Biotechnol.">
        <title>Analysis of soluble protein contents from the nematocysts of a model sea anemone sheds light on venom evolution.</title>
        <authorList>
            <person name="Moran Y."/>
            <person name="Praher D."/>
            <person name="Schlesinger A."/>
            <person name="Ayalon A."/>
            <person name="Tal Y."/>
            <person name="Technau U."/>
        </authorList>
    </citation>
    <scope>NUCLEOTIDE SEQUENCE [GENOMIC DNA]</scope>
    <scope>IDENTIFICATION BY MASS SPECTROMETRY</scope>
    <scope>SUBCELLULAR LOCATION</scope>
    <scope>TISSUE SPECIFICITY</scope>
</reference>
<reference key="3">
    <citation type="journal article" date="2018" name="Elife">
        <title>Dynamics of venom composition across a complex life cycle.</title>
        <authorList>
            <person name="Columbus-Shenkar Y.Y."/>
            <person name="Sachkova M.Y."/>
            <person name="Macrander J."/>
            <person name="Fridrich A."/>
            <person name="Modepalli V."/>
            <person name="Reitzel A.M."/>
            <person name="Sunagar K."/>
            <person name="Moran Y."/>
        </authorList>
    </citation>
    <scope>PROBABLE FUNCTION</scope>
    <scope>DEVELOPMENTAL STAGE</scope>
    <scope>TISSUE SPECIFICITY</scope>
</reference>
<evidence type="ECO:0000255" key="1"/>
<evidence type="ECO:0000255" key="2">
    <source>
        <dbReference type="PROSITE-ProRule" id="PRU01005"/>
    </source>
</evidence>
<evidence type="ECO:0000256" key="3">
    <source>
        <dbReference type="SAM" id="MobiDB-lite"/>
    </source>
</evidence>
<evidence type="ECO:0000269" key="4">
    <source>
    </source>
</evidence>
<evidence type="ECO:0000269" key="5">
    <source>
    </source>
</evidence>
<evidence type="ECO:0000303" key="6">
    <source>
    </source>
</evidence>
<evidence type="ECO:0000305" key="7"/>
<evidence type="ECO:0000305" key="8">
    <source>
    </source>
</evidence>
<evidence type="ECO:0000312" key="9">
    <source>
        <dbReference type="EMBL" id="EDO31595.1"/>
    </source>
</evidence>
<evidence type="ECO:0000312" key="10">
    <source>
        <dbReference type="Proteomes" id="UP000001593"/>
    </source>
</evidence>
<name>NEP8_NEMVE</name>
<gene>
    <name evidence="9" type="ORF">v1g219037</name>
</gene>
<comment type="function">
    <text evidence="8">Probable toxin probably only used for predation.</text>
</comment>
<comment type="subcellular location">
    <subcellularLocation>
        <location evidence="4">Nematocyst</location>
    </subcellularLocation>
    <subcellularLocation>
        <location evidence="4">Secreted</location>
    </subcellularLocation>
</comment>
<comment type="tissue specificity">
    <text evidence="4 5">Nematocytes (PubMed:23151943, PubMed:29424690). In late planulae, is only expressed in a handful of nematocytes in the lower pharynx (PubMed:29424690). Is absent from the tentacles and outer body wall (PubMed:29424690).</text>
</comment>
<comment type="developmental stage">
    <text evidence="5">Transcripts are weakly expressed in gastrulae, early and late planulae, metamorphosing planulae, and primary polyps.</text>
</comment>
<comment type="similarity">
    <text evidence="7">Belongs to the NEP3 family.</text>
</comment>
<comment type="sequence caution" evidence="7">
    <conflict type="erroneous gene model prediction">
        <sequence resource="EMBL-CDS" id="EDO31595"/>
    </conflict>
</comment>
<proteinExistence type="evidence at protein level"/>
<protein>
    <recommendedName>
        <fullName evidence="6">Nematocyst expressed protein 8</fullName>
        <shortName evidence="6">NEP-8</shortName>
        <shortName evidence="7">NEP8</shortName>
    </recommendedName>
</protein>
<keyword id="KW-1015">Disulfide bond</keyword>
<keyword id="KW-0166">Nematocyst</keyword>
<keyword id="KW-1185">Reference proteome</keyword>
<keyword id="KW-0677">Repeat</keyword>
<keyword id="KW-0964">Secreted</keyword>
<keyword id="KW-0732">Signal</keyword>
<keyword id="KW-0800">Toxin</keyword>
<sequence length="313" mass="33926">MLRRPLLLVLFTVFSTLYAKDLRGVSPPTNESEAEVSPGDDEGPPEPGNEPDVNWRTLTIDPEDCKDKGKDCESLADEGNCLKKLNYAVGNCPWTCRFCKKENGDSKKCKDLAGERHCNGWKVKGDCVRLPDYMMQNCKLSCELCGPETRFKYTDEDVRCPEWAQAGYCSTNTDINLKCPHSCRKYKQRAPASTPYPYPVEALHPYQYRVVLPSVTILQTTTAAPSTQPAETTKAPPNTAAPTAAPTPAPTPAPAPAPTPAPVAPAPQTAPLAGSPPESTPEEQDDNSADESTEIEAGEGGGELCDEKHSSQQ</sequence>
<organism>
    <name type="scientific">Nematostella vectensis</name>
    <name type="common">Starlet sea anemone</name>
    <dbReference type="NCBI Taxonomy" id="45351"/>
    <lineage>
        <taxon>Eukaryota</taxon>
        <taxon>Metazoa</taxon>
        <taxon>Cnidaria</taxon>
        <taxon>Anthozoa</taxon>
        <taxon>Hexacorallia</taxon>
        <taxon>Actiniaria</taxon>
        <taxon>Edwardsiidae</taxon>
        <taxon>Nematostella</taxon>
    </lineage>
</organism>
<dbReference type="EMBL" id="DS469888">
    <property type="protein sequence ID" value="EDO31595.1"/>
    <property type="status" value="ALT_SEQ"/>
    <property type="molecule type" value="Genomic_DNA"/>
</dbReference>
<dbReference type="RefSeq" id="XP_001623695.1">
    <property type="nucleotide sequence ID" value="XM_001623645.1"/>
</dbReference>
<dbReference type="SMR" id="A7SXG9"/>
<dbReference type="STRING" id="45351.A7SXG9"/>
<dbReference type="EnsemblMetazoa" id="EDO31595">
    <property type="protein sequence ID" value="EDO31595"/>
    <property type="gene ID" value="NEMVEDRAFT_v1g219037"/>
</dbReference>
<dbReference type="HOGENOM" id="CLU_683908_0_0_1"/>
<dbReference type="InParanoid" id="A7SXG9"/>
<dbReference type="Proteomes" id="UP000001593">
    <property type="component" value="Unassembled WGS sequence"/>
</dbReference>
<dbReference type="GO" id="GO:0005576">
    <property type="term" value="C:extracellular region"/>
    <property type="evidence" value="ECO:0007669"/>
    <property type="project" value="UniProtKB-SubCell"/>
</dbReference>
<dbReference type="GO" id="GO:0042151">
    <property type="term" value="C:nematocyst"/>
    <property type="evidence" value="ECO:0007669"/>
    <property type="project" value="UniProtKB-SubCell"/>
</dbReference>
<dbReference type="GO" id="GO:0090729">
    <property type="term" value="F:toxin activity"/>
    <property type="evidence" value="ECO:0007669"/>
    <property type="project" value="UniProtKB-KW"/>
</dbReference>
<dbReference type="InterPro" id="IPR003582">
    <property type="entry name" value="ShKT_dom"/>
</dbReference>
<dbReference type="Pfam" id="PF01549">
    <property type="entry name" value="ShK"/>
    <property type="match status" value="3"/>
</dbReference>
<dbReference type="SMART" id="SM00254">
    <property type="entry name" value="ShKT"/>
    <property type="match status" value="3"/>
</dbReference>
<dbReference type="PROSITE" id="PS51670">
    <property type="entry name" value="SHKT"/>
    <property type="match status" value="2"/>
</dbReference>
<accession>A7SXG9</accession>